<dbReference type="EMBL" id="AK002930">
    <property type="protein sequence ID" value="BAB22465.1"/>
    <property type="molecule type" value="mRNA"/>
</dbReference>
<dbReference type="EMBL" id="AK006018">
    <property type="protein sequence ID" value="BAB24368.1"/>
    <property type="molecule type" value="mRNA"/>
</dbReference>
<dbReference type="EMBL" id="BC024423">
    <property type="protein sequence ID" value="AAH24423.1"/>
    <property type="molecule type" value="mRNA"/>
</dbReference>
<dbReference type="CCDS" id="CCDS29816.1">
    <molecule id="Q9DAA6-1"/>
</dbReference>
<dbReference type="CCDS" id="CCDS50436.1">
    <molecule id="Q9DAA6-2"/>
</dbReference>
<dbReference type="RefSeq" id="NP_001158033.1">
    <molecule id="Q9DAA6-2"/>
    <property type="nucleotide sequence ID" value="NM_001164561.1"/>
</dbReference>
<dbReference type="RefSeq" id="NP_001307160.1">
    <property type="nucleotide sequence ID" value="NM_001320231.1"/>
</dbReference>
<dbReference type="RefSeq" id="NP_001307161.1">
    <property type="nucleotide sequence ID" value="NM_001320232.1"/>
</dbReference>
<dbReference type="RefSeq" id="NP_001307162.1">
    <property type="nucleotide sequence ID" value="NM_001320233.1"/>
</dbReference>
<dbReference type="RefSeq" id="NP_079920.1">
    <molecule id="Q9DAA6-1"/>
    <property type="nucleotide sequence ID" value="NM_025644.4"/>
</dbReference>
<dbReference type="SMR" id="Q9DAA6"/>
<dbReference type="BioGRID" id="211569">
    <property type="interactions" value="19"/>
</dbReference>
<dbReference type="ComplexPortal" id="CPX-594">
    <property type="entry name" value="Nuclear exosome complex, Dis3-Exosc10 variant"/>
</dbReference>
<dbReference type="ComplexPortal" id="CPX-595">
    <property type="entry name" value="Nucleolar exosome complex, Exosc10 variant"/>
</dbReference>
<dbReference type="ComplexPortal" id="CPX-596">
    <property type="entry name" value="Cytoplasmic exosome complex, Dis3l variant"/>
</dbReference>
<dbReference type="ComplexPortal" id="CPX-598">
    <property type="entry name" value="Exosome complex, Dis3 variant"/>
</dbReference>
<dbReference type="ComplexPortal" id="CPX-601">
    <property type="entry name" value="Cytoplasmic exosome complex, Dis3l-Exosc10 variant"/>
</dbReference>
<dbReference type="FunCoup" id="Q9DAA6">
    <property type="interactions" value="3386"/>
</dbReference>
<dbReference type="IntAct" id="Q9DAA6">
    <property type="interactions" value="16"/>
</dbReference>
<dbReference type="STRING" id="10090.ENSMUSP00000074756"/>
<dbReference type="iPTMnet" id="Q9DAA6"/>
<dbReference type="PhosphoSitePlus" id="Q9DAA6"/>
<dbReference type="SwissPalm" id="Q9DAA6"/>
<dbReference type="PaxDb" id="10090-ENSMUSP00000074756"/>
<dbReference type="PeptideAtlas" id="Q9DAA6"/>
<dbReference type="ProteomicsDB" id="267671">
    <molecule id="Q9DAA6-1"/>
</dbReference>
<dbReference type="ProteomicsDB" id="267672">
    <molecule id="Q9DAA6-2"/>
</dbReference>
<dbReference type="Pumba" id="Q9DAA6"/>
<dbReference type="Antibodypedia" id="30884">
    <property type="antibodies" value="239 antibodies from 25 providers"/>
</dbReference>
<dbReference type="DNASU" id="66583"/>
<dbReference type="Ensembl" id="ENSMUST00000075280.12">
    <molecule id="Q9DAA6-1"/>
    <property type="protein sequence ID" value="ENSMUSP00000074756.5"/>
    <property type="gene ID" value="ENSMUSG00000034321.15"/>
</dbReference>
<dbReference type="Ensembl" id="ENSMUST00000112123.4">
    <molecule id="Q9DAA6-2"/>
    <property type="protein sequence ID" value="ENSMUSP00000107751.3"/>
    <property type="gene ID" value="ENSMUSG00000034321.15"/>
</dbReference>
<dbReference type="GeneID" id="66583"/>
<dbReference type="KEGG" id="mmu:66583"/>
<dbReference type="UCSC" id="uc008hmm.2">
    <molecule id="Q9DAA6-1"/>
    <property type="organism name" value="mouse"/>
</dbReference>
<dbReference type="UCSC" id="uc008hmn.2">
    <molecule id="Q9DAA6-2"/>
    <property type="organism name" value="mouse"/>
</dbReference>
<dbReference type="AGR" id="MGI:1913833"/>
<dbReference type="CTD" id="51013"/>
<dbReference type="MGI" id="MGI:1913833">
    <property type="gene designation" value="Exosc1"/>
</dbReference>
<dbReference type="VEuPathDB" id="HostDB:ENSMUSG00000034321"/>
<dbReference type="eggNOG" id="KOG3409">
    <property type="taxonomic scope" value="Eukaryota"/>
</dbReference>
<dbReference type="GeneTree" id="ENSGT00390000015287"/>
<dbReference type="HOGENOM" id="CLU_067135_3_0_1"/>
<dbReference type="InParanoid" id="Q9DAA6"/>
<dbReference type="OMA" id="PMVPVGW"/>
<dbReference type="OrthoDB" id="440760at2759"/>
<dbReference type="PhylomeDB" id="Q9DAA6"/>
<dbReference type="TreeFam" id="TF316607"/>
<dbReference type="Reactome" id="R-MMU-429958">
    <property type="pathway name" value="mRNA decay by 3' to 5' exoribonuclease"/>
</dbReference>
<dbReference type="Reactome" id="R-MMU-450385">
    <property type="pathway name" value="Butyrate Response Factor 1 (BRF1) binds and destabilizes mRNA"/>
</dbReference>
<dbReference type="Reactome" id="R-MMU-450513">
    <property type="pathway name" value="Tristetraprolin (TTP, ZFP36) binds and destabilizes mRNA"/>
</dbReference>
<dbReference type="Reactome" id="R-MMU-450604">
    <property type="pathway name" value="KSRP (KHSRP) binds and destabilizes mRNA"/>
</dbReference>
<dbReference type="Reactome" id="R-MMU-6791226">
    <property type="pathway name" value="Major pathway of rRNA processing in the nucleolus and cytosol"/>
</dbReference>
<dbReference type="BioGRID-ORCS" id="66583">
    <property type="hits" value="24 hits in 81 CRISPR screens"/>
</dbReference>
<dbReference type="ChiTaRS" id="Exosc1">
    <property type="organism name" value="mouse"/>
</dbReference>
<dbReference type="PRO" id="PR:Q9DAA6"/>
<dbReference type="Proteomes" id="UP000000589">
    <property type="component" value="Chromosome 19"/>
</dbReference>
<dbReference type="RNAct" id="Q9DAA6">
    <property type="molecule type" value="protein"/>
</dbReference>
<dbReference type="Bgee" id="ENSMUSG00000034321">
    <property type="expression patterns" value="Expressed in dorsal pancreas and 226 other cell types or tissues"/>
</dbReference>
<dbReference type="GO" id="GO:0000177">
    <property type="term" value="C:cytoplasmic exosome (RNase complex)"/>
    <property type="evidence" value="ECO:0000303"/>
    <property type="project" value="ComplexPortal"/>
</dbReference>
<dbReference type="GO" id="GO:0005829">
    <property type="term" value="C:cytosol"/>
    <property type="evidence" value="ECO:0000266"/>
    <property type="project" value="ComplexPortal"/>
</dbReference>
<dbReference type="GO" id="GO:0000178">
    <property type="term" value="C:exosome (RNase complex)"/>
    <property type="evidence" value="ECO:0000250"/>
    <property type="project" value="UniProtKB"/>
</dbReference>
<dbReference type="GO" id="GO:0000176">
    <property type="term" value="C:nuclear exosome (RNase complex)"/>
    <property type="evidence" value="ECO:0000303"/>
    <property type="project" value="ComplexPortal"/>
</dbReference>
<dbReference type="GO" id="GO:0101019">
    <property type="term" value="C:nucleolar exosome (RNase complex)"/>
    <property type="evidence" value="ECO:0000303"/>
    <property type="project" value="ComplexPortal"/>
</dbReference>
<dbReference type="GO" id="GO:0005730">
    <property type="term" value="C:nucleolus"/>
    <property type="evidence" value="ECO:0000250"/>
    <property type="project" value="UniProtKB"/>
</dbReference>
<dbReference type="GO" id="GO:0005634">
    <property type="term" value="C:nucleus"/>
    <property type="evidence" value="ECO:0000266"/>
    <property type="project" value="ComplexPortal"/>
</dbReference>
<dbReference type="GO" id="GO:0003723">
    <property type="term" value="F:RNA binding"/>
    <property type="evidence" value="ECO:0007669"/>
    <property type="project" value="UniProtKB-KW"/>
</dbReference>
<dbReference type="GO" id="GO:0006401">
    <property type="term" value="P:RNA catabolic process"/>
    <property type="evidence" value="ECO:0000266"/>
    <property type="project" value="ComplexPortal"/>
</dbReference>
<dbReference type="GO" id="GO:0006396">
    <property type="term" value="P:RNA processing"/>
    <property type="evidence" value="ECO:0000266"/>
    <property type="project" value="MGI"/>
</dbReference>
<dbReference type="GO" id="GO:0006364">
    <property type="term" value="P:rRNA processing"/>
    <property type="evidence" value="ECO:0007669"/>
    <property type="project" value="UniProtKB-KW"/>
</dbReference>
<dbReference type="CDD" id="cd05791">
    <property type="entry name" value="S1_CSL4"/>
    <property type="match status" value="1"/>
</dbReference>
<dbReference type="FunFam" id="2.40.50.100:FF:000024">
    <property type="entry name" value="Exosome complex component CSL4"/>
    <property type="match status" value="1"/>
</dbReference>
<dbReference type="FunFam" id="2.40.50.140:FF:000135">
    <property type="entry name" value="Exosome complex component CSL4"/>
    <property type="match status" value="1"/>
</dbReference>
<dbReference type="Gene3D" id="2.40.50.100">
    <property type="match status" value="1"/>
</dbReference>
<dbReference type="Gene3D" id="2.40.50.140">
    <property type="entry name" value="Nucleic acid-binding proteins"/>
    <property type="match status" value="1"/>
</dbReference>
<dbReference type="InterPro" id="IPR039771">
    <property type="entry name" value="Csl4"/>
</dbReference>
<dbReference type="InterPro" id="IPR019495">
    <property type="entry name" value="EXOSC1_C"/>
</dbReference>
<dbReference type="InterPro" id="IPR025721">
    <property type="entry name" value="Exosome_cplx_N_dom"/>
</dbReference>
<dbReference type="InterPro" id="IPR012340">
    <property type="entry name" value="NA-bd_OB-fold"/>
</dbReference>
<dbReference type="InterPro" id="IPR003029">
    <property type="entry name" value="S1_domain"/>
</dbReference>
<dbReference type="PANTHER" id="PTHR12686">
    <property type="entry name" value="3'-5' EXORIBONUCLEASE CSL4-RELATED"/>
    <property type="match status" value="1"/>
</dbReference>
<dbReference type="PANTHER" id="PTHR12686:SF8">
    <property type="entry name" value="EXOSOME COMPLEX COMPONENT CSL4"/>
    <property type="match status" value="1"/>
</dbReference>
<dbReference type="Pfam" id="PF14382">
    <property type="entry name" value="ECR1_N"/>
    <property type="match status" value="1"/>
</dbReference>
<dbReference type="Pfam" id="PF10447">
    <property type="entry name" value="EXOSC1"/>
    <property type="match status" value="1"/>
</dbReference>
<dbReference type="SMART" id="SM00316">
    <property type="entry name" value="S1"/>
    <property type="match status" value="1"/>
</dbReference>
<dbReference type="SUPFAM" id="SSF50249">
    <property type="entry name" value="Nucleic acid-binding proteins"/>
    <property type="match status" value="1"/>
</dbReference>
<dbReference type="SUPFAM" id="SSF110324">
    <property type="entry name" value="Ribosomal L27 protein-like"/>
    <property type="match status" value="1"/>
</dbReference>
<sequence length="195" mass="21424">MAPPVRYCIPGERLCNLEEGSPGSGTYTRHGYIFSSLAGCLMKTSENGAVPVVSVMRETESQLLPDVGAVVTCKVSSINSRFAKVHILYVGSTPLKNAFRGTIRKEDIRATEKDKVEIYKSFRPGDIVLAKVISLGDAQSNYLLTTAENELGVVVAHSESGVQMVPISWCEMQCPKTHTKEFRKVARVQPEFLQT</sequence>
<feature type="chain" id="PRO_0000087128" description="Exosome complex component CSL4">
    <location>
        <begin position="1"/>
        <end position="195"/>
    </location>
</feature>
<feature type="domain" description="S1 motif">
    <location>
        <begin position="66"/>
        <end position="147"/>
    </location>
</feature>
<feature type="modified residue" description="Phosphoserine" evidence="1">
    <location>
        <position position="21"/>
    </location>
</feature>
<feature type="splice variant" id="VSP_004176" description="In isoform 2." evidence="2">
    <location>
        <begin position="76"/>
        <end position="116"/>
    </location>
</feature>
<accession>Q9DAA6</accession>
<accession>Q9DCB9</accession>
<gene>
    <name type="primary">Exosc1</name>
    <name type="synonym">Csl4</name>
</gene>
<keyword id="KW-0025">Alternative splicing</keyword>
<keyword id="KW-0963">Cytoplasm</keyword>
<keyword id="KW-0271">Exosome</keyword>
<keyword id="KW-0539">Nucleus</keyword>
<keyword id="KW-0597">Phosphoprotein</keyword>
<keyword id="KW-1185">Reference proteome</keyword>
<keyword id="KW-0694">RNA-binding</keyword>
<keyword id="KW-0698">rRNA processing</keyword>
<reference key="1">
    <citation type="journal article" date="2005" name="Science">
        <title>The transcriptional landscape of the mammalian genome.</title>
        <authorList>
            <person name="Carninci P."/>
            <person name="Kasukawa T."/>
            <person name="Katayama S."/>
            <person name="Gough J."/>
            <person name="Frith M.C."/>
            <person name="Maeda N."/>
            <person name="Oyama R."/>
            <person name="Ravasi T."/>
            <person name="Lenhard B."/>
            <person name="Wells C."/>
            <person name="Kodzius R."/>
            <person name="Shimokawa K."/>
            <person name="Bajic V.B."/>
            <person name="Brenner S.E."/>
            <person name="Batalov S."/>
            <person name="Forrest A.R."/>
            <person name="Zavolan M."/>
            <person name="Davis M.J."/>
            <person name="Wilming L.G."/>
            <person name="Aidinis V."/>
            <person name="Allen J.E."/>
            <person name="Ambesi-Impiombato A."/>
            <person name="Apweiler R."/>
            <person name="Aturaliya R.N."/>
            <person name="Bailey T.L."/>
            <person name="Bansal M."/>
            <person name="Baxter L."/>
            <person name="Beisel K.W."/>
            <person name="Bersano T."/>
            <person name="Bono H."/>
            <person name="Chalk A.M."/>
            <person name="Chiu K.P."/>
            <person name="Choudhary V."/>
            <person name="Christoffels A."/>
            <person name="Clutterbuck D.R."/>
            <person name="Crowe M.L."/>
            <person name="Dalla E."/>
            <person name="Dalrymple B.P."/>
            <person name="de Bono B."/>
            <person name="Della Gatta G."/>
            <person name="di Bernardo D."/>
            <person name="Down T."/>
            <person name="Engstrom P."/>
            <person name="Fagiolini M."/>
            <person name="Faulkner G."/>
            <person name="Fletcher C.F."/>
            <person name="Fukushima T."/>
            <person name="Furuno M."/>
            <person name="Futaki S."/>
            <person name="Gariboldi M."/>
            <person name="Georgii-Hemming P."/>
            <person name="Gingeras T.R."/>
            <person name="Gojobori T."/>
            <person name="Green R.E."/>
            <person name="Gustincich S."/>
            <person name="Harbers M."/>
            <person name="Hayashi Y."/>
            <person name="Hensch T.K."/>
            <person name="Hirokawa N."/>
            <person name="Hill D."/>
            <person name="Huminiecki L."/>
            <person name="Iacono M."/>
            <person name="Ikeo K."/>
            <person name="Iwama A."/>
            <person name="Ishikawa T."/>
            <person name="Jakt M."/>
            <person name="Kanapin A."/>
            <person name="Katoh M."/>
            <person name="Kawasawa Y."/>
            <person name="Kelso J."/>
            <person name="Kitamura H."/>
            <person name="Kitano H."/>
            <person name="Kollias G."/>
            <person name="Krishnan S.P."/>
            <person name="Kruger A."/>
            <person name="Kummerfeld S.K."/>
            <person name="Kurochkin I.V."/>
            <person name="Lareau L.F."/>
            <person name="Lazarevic D."/>
            <person name="Lipovich L."/>
            <person name="Liu J."/>
            <person name="Liuni S."/>
            <person name="McWilliam S."/>
            <person name="Madan Babu M."/>
            <person name="Madera M."/>
            <person name="Marchionni L."/>
            <person name="Matsuda H."/>
            <person name="Matsuzawa S."/>
            <person name="Miki H."/>
            <person name="Mignone F."/>
            <person name="Miyake S."/>
            <person name="Morris K."/>
            <person name="Mottagui-Tabar S."/>
            <person name="Mulder N."/>
            <person name="Nakano N."/>
            <person name="Nakauchi H."/>
            <person name="Ng P."/>
            <person name="Nilsson R."/>
            <person name="Nishiguchi S."/>
            <person name="Nishikawa S."/>
            <person name="Nori F."/>
            <person name="Ohara O."/>
            <person name="Okazaki Y."/>
            <person name="Orlando V."/>
            <person name="Pang K.C."/>
            <person name="Pavan W.J."/>
            <person name="Pavesi G."/>
            <person name="Pesole G."/>
            <person name="Petrovsky N."/>
            <person name="Piazza S."/>
            <person name="Reed J."/>
            <person name="Reid J.F."/>
            <person name="Ring B.Z."/>
            <person name="Ringwald M."/>
            <person name="Rost B."/>
            <person name="Ruan Y."/>
            <person name="Salzberg S.L."/>
            <person name="Sandelin A."/>
            <person name="Schneider C."/>
            <person name="Schoenbach C."/>
            <person name="Sekiguchi K."/>
            <person name="Semple C.A."/>
            <person name="Seno S."/>
            <person name="Sessa L."/>
            <person name="Sheng Y."/>
            <person name="Shibata Y."/>
            <person name="Shimada H."/>
            <person name="Shimada K."/>
            <person name="Silva D."/>
            <person name="Sinclair B."/>
            <person name="Sperling S."/>
            <person name="Stupka E."/>
            <person name="Sugiura K."/>
            <person name="Sultana R."/>
            <person name="Takenaka Y."/>
            <person name="Taki K."/>
            <person name="Tammoja K."/>
            <person name="Tan S.L."/>
            <person name="Tang S."/>
            <person name="Taylor M.S."/>
            <person name="Tegner J."/>
            <person name="Teichmann S.A."/>
            <person name="Ueda H.R."/>
            <person name="van Nimwegen E."/>
            <person name="Verardo R."/>
            <person name="Wei C.L."/>
            <person name="Yagi K."/>
            <person name="Yamanishi H."/>
            <person name="Zabarovsky E."/>
            <person name="Zhu S."/>
            <person name="Zimmer A."/>
            <person name="Hide W."/>
            <person name="Bult C."/>
            <person name="Grimmond S.M."/>
            <person name="Teasdale R.D."/>
            <person name="Liu E.T."/>
            <person name="Brusic V."/>
            <person name="Quackenbush J."/>
            <person name="Wahlestedt C."/>
            <person name="Mattick J.S."/>
            <person name="Hume D.A."/>
            <person name="Kai C."/>
            <person name="Sasaki D."/>
            <person name="Tomaru Y."/>
            <person name="Fukuda S."/>
            <person name="Kanamori-Katayama M."/>
            <person name="Suzuki M."/>
            <person name="Aoki J."/>
            <person name="Arakawa T."/>
            <person name="Iida J."/>
            <person name="Imamura K."/>
            <person name="Itoh M."/>
            <person name="Kato T."/>
            <person name="Kawaji H."/>
            <person name="Kawagashira N."/>
            <person name="Kawashima T."/>
            <person name="Kojima M."/>
            <person name="Kondo S."/>
            <person name="Konno H."/>
            <person name="Nakano K."/>
            <person name="Ninomiya N."/>
            <person name="Nishio T."/>
            <person name="Okada M."/>
            <person name="Plessy C."/>
            <person name="Shibata K."/>
            <person name="Shiraki T."/>
            <person name="Suzuki S."/>
            <person name="Tagami M."/>
            <person name="Waki K."/>
            <person name="Watahiki A."/>
            <person name="Okamura-Oho Y."/>
            <person name="Suzuki H."/>
            <person name="Kawai J."/>
            <person name="Hayashizaki Y."/>
        </authorList>
    </citation>
    <scope>NUCLEOTIDE SEQUENCE [LARGE SCALE MRNA] (ISOFORMS 1 AND 2)</scope>
    <source>
        <strain>C57BL/6J</strain>
        <tissue>Testis</tissue>
    </source>
</reference>
<reference key="2">
    <citation type="journal article" date="2004" name="Genome Res.">
        <title>The status, quality, and expansion of the NIH full-length cDNA project: the Mammalian Gene Collection (MGC).</title>
        <authorList>
            <consortium name="The MGC Project Team"/>
        </authorList>
    </citation>
    <scope>NUCLEOTIDE SEQUENCE [LARGE SCALE MRNA] (ISOFORM 1)</scope>
</reference>
<reference key="3">
    <citation type="journal article" date="2010" name="Cell">
        <title>A tissue-specific atlas of mouse protein phosphorylation and expression.</title>
        <authorList>
            <person name="Huttlin E.L."/>
            <person name="Jedrychowski M.P."/>
            <person name="Elias J.E."/>
            <person name="Goswami T."/>
            <person name="Rad R."/>
            <person name="Beausoleil S.A."/>
            <person name="Villen J."/>
            <person name="Haas W."/>
            <person name="Sowa M.E."/>
            <person name="Gygi S.P."/>
        </authorList>
    </citation>
    <scope>IDENTIFICATION BY MASS SPECTROMETRY [LARGE SCALE ANALYSIS]</scope>
    <source>
        <tissue>Brain</tissue>
        <tissue>Kidney</tissue>
        <tissue>Liver</tissue>
        <tissue>Lung</tissue>
        <tissue>Pancreas</tissue>
        <tissue>Spleen</tissue>
        <tissue>Testis</tissue>
    </source>
</reference>
<comment type="function">
    <text evidence="1">Non-catalytic component of the RNA exosome complex which has 3'-&gt;5' exoribonuclease activity and participates in a multitude of cellular RNA processing and degradation events. In the nucleus, the RNA exosome complex is involved in proper maturation of stable RNA species such as rRNA, snRNA and snoRNA, in the elimination of RNA processing by-products and non-coding 'pervasive' transcripts, such as antisense RNA species and promoter-upstream transcripts (PROMPTs), and of mRNAs with processing defects, thereby limiting or excluding their export to the cytoplasm. The RNA exosome may be involved in Ig class switch recombination (CSR) and/or Ig variable region somatic hypermutation (SHM) by targeting AICDA deamination activity to transcribed dsDNA substrates. In the cytoplasm, the RNA exosome complex is involved in general mRNA turnover and specifically degrades inherently unstable mRNAs containing AU-rich elements (AREs) within their 3' untranslated regions, and in RNA surveillance pathways, preventing translation of aberrant mRNAs. It seems to be involved in degradation of histone mRNA. The catalytic inactive RNA exosome core complex of 9 subunits (Exo-9) is proposed to play a pivotal role in the binding and presentation of RNA for ribonucleolysis, and to serve as a scaffold for the association with catalytic subunits and accessory proteins or complexes. EXOSC1 as peripheral part of the Exo-9 complex stabilizes the hexameric ring of RNase PH-domain subunits through contacts with EXOSC6 and EXOSC8 (By similarity).</text>
</comment>
<comment type="subunit">
    <text evidence="1">Component of the RNA exosome core complex (Exo-9), composed of EXOSC1, EXOSC2, EXOSC3, EXOSC4, EXOSC5, EXOSC6, EXOSC7, EXOSC8 and EXOSC9; within the complex interacts with EXOSC6 (By similarity). The catalytically inactive RNA exosome core complex (Exo-9) associates with the catalytic subunit EXOSC10/RRP6 (By similarity). Exo-9 may associate with DIS3 to form the nucleolar exosome complex, or DIS3L to form the cytoplasmic exosome complex (By similarity). Exo-9 is formed by a hexameric base ring consisting of the heterodimers EXOSC4-EXOSC9, EXOSC5-EXOSC8 and EXOSC6-EXOSC7, and a cap ring consisting of EXOSC1, EXOSC2 and EXOSC3 (By similarity). The RNA exosome complex associates with cofactors C1D/RRP47, MPHOSPH6/MPP6 and MTREX/MTR4 (By similarity). Interacts with DDX60 (By similarity).</text>
</comment>
<comment type="subcellular location">
    <subcellularLocation>
        <location>Nucleus</location>
        <location>Nucleolus</location>
    </subcellularLocation>
    <subcellularLocation>
        <location evidence="1">Nucleus</location>
    </subcellularLocation>
    <subcellularLocation>
        <location evidence="1">Cytoplasm</location>
    </subcellularLocation>
</comment>
<comment type="alternative products">
    <event type="alternative splicing"/>
    <isoform>
        <id>Q9DAA6-1</id>
        <name>1</name>
        <sequence type="displayed"/>
    </isoform>
    <isoform>
        <id>Q9DAA6-2</id>
        <name>2</name>
        <sequence type="described" ref="VSP_004176"/>
    </isoform>
</comment>
<comment type="similarity">
    <text evidence="3">Belongs to the CSL4 family.</text>
</comment>
<name>EXOS1_MOUSE</name>
<organism evidence="4">
    <name type="scientific">Mus musculus</name>
    <name type="common">Mouse</name>
    <dbReference type="NCBI Taxonomy" id="10090"/>
    <lineage>
        <taxon>Eukaryota</taxon>
        <taxon>Metazoa</taxon>
        <taxon>Chordata</taxon>
        <taxon>Craniata</taxon>
        <taxon>Vertebrata</taxon>
        <taxon>Euteleostomi</taxon>
        <taxon>Mammalia</taxon>
        <taxon>Eutheria</taxon>
        <taxon>Euarchontoglires</taxon>
        <taxon>Glires</taxon>
        <taxon>Rodentia</taxon>
        <taxon>Myomorpha</taxon>
        <taxon>Muroidea</taxon>
        <taxon>Muridae</taxon>
        <taxon>Murinae</taxon>
        <taxon>Mus</taxon>
        <taxon>Mus</taxon>
    </lineage>
</organism>
<proteinExistence type="evidence at protein level"/>
<protein>
    <recommendedName>
        <fullName>Exosome complex component CSL4</fullName>
    </recommendedName>
    <alternativeName>
        <fullName>Exosome component 1</fullName>
    </alternativeName>
</protein>
<evidence type="ECO:0000250" key="1">
    <source>
        <dbReference type="UniProtKB" id="Q9Y3B2"/>
    </source>
</evidence>
<evidence type="ECO:0000303" key="2">
    <source>
    </source>
</evidence>
<evidence type="ECO:0000305" key="3"/>
<evidence type="ECO:0000312" key="4">
    <source>
        <dbReference type="EMBL" id="BAB24368.1"/>
    </source>
</evidence>